<sequence length="400" mass="47478">MATMISNLPRDLIEEIFSRVPLTSMKAVRLTCKSWNNLSKSESFTKVHIGRAATREEKTMIVDVMPHKLNLMSIVIDDVTPSAEFKGQFSLLHKNYRINQVLHYEGLLLCIMKDPTRIVVWNPYLGQTRWIQLRYFHRPHGIDHFRYALGYADKESCSSLKFLRFLDYFYKAPEEEFFWYEIYDFDSGLWTTLNVTPHWGIYSTCPCVSLKGNTYWPAKERSTQGFQDYIIRFDFTRERFGPLLALPTDRESSFVSLSCVKEEKLAALFKHRLHHDSYEYEFEIWITTKIEVEMVSWSKFLRMDMRPKMELPLTFYIDEEKKVFMGFDHGEYPKLLFLNVVGETGFLRKFENIQYRSPCSYVPSLVQVKKLARDRLRKQRSLENRRFAQNILRLARNGKS</sequence>
<name>FB278_ARATH</name>
<organism>
    <name type="scientific">Arabidopsis thaliana</name>
    <name type="common">Mouse-ear cress</name>
    <dbReference type="NCBI Taxonomy" id="3702"/>
    <lineage>
        <taxon>Eukaryota</taxon>
        <taxon>Viridiplantae</taxon>
        <taxon>Streptophyta</taxon>
        <taxon>Embryophyta</taxon>
        <taxon>Tracheophyta</taxon>
        <taxon>Spermatophyta</taxon>
        <taxon>Magnoliopsida</taxon>
        <taxon>eudicotyledons</taxon>
        <taxon>Gunneridae</taxon>
        <taxon>Pentapetalae</taxon>
        <taxon>rosids</taxon>
        <taxon>malvids</taxon>
        <taxon>Brassicales</taxon>
        <taxon>Brassicaceae</taxon>
        <taxon>Camelineae</taxon>
        <taxon>Arabidopsis</taxon>
    </lineage>
</organism>
<accession>Q9FFS9</accession>
<keyword id="KW-1185">Reference proteome</keyword>
<evidence type="ECO:0000255" key="1">
    <source>
        <dbReference type="PROSITE-ProRule" id="PRU00080"/>
    </source>
</evidence>
<feature type="chain" id="PRO_0000283544" description="Putative F-box protein At5g41510">
    <location>
        <begin position="1"/>
        <end position="400"/>
    </location>
</feature>
<feature type="domain" description="F-box" evidence="1">
    <location>
        <begin position="2"/>
        <end position="47"/>
    </location>
</feature>
<gene>
    <name type="ordered locus">At5g41510</name>
    <name type="ORF">MBK23.3</name>
</gene>
<protein>
    <recommendedName>
        <fullName>Putative F-box protein At5g41510</fullName>
    </recommendedName>
</protein>
<reference key="1">
    <citation type="journal article" date="1997" name="DNA Res.">
        <title>Structural analysis of Arabidopsis thaliana chromosome 5. I. Sequence features of the 1.6 Mb regions covered by twenty physically assigned P1 clones.</title>
        <authorList>
            <person name="Sato S."/>
            <person name="Kotani H."/>
            <person name="Nakamura Y."/>
            <person name="Kaneko T."/>
            <person name="Asamizu E."/>
            <person name="Fukami M."/>
            <person name="Miyajima N."/>
            <person name="Tabata S."/>
        </authorList>
    </citation>
    <scope>NUCLEOTIDE SEQUENCE [LARGE SCALE GENOMIC DNA]</scope>
    <source>
        <strain>cv. Columbia</strain>
    </source>
</reference>
<reference key="2">
    <citation type="journal article" date="2017" name="Plant J.">
        <title>Araport11: a complete reannotation of the Arabidopsis thaliana reference genome.</title>
        <authorList>
            <person name="Cheng C.Y."/>
            <person name="Krishnakumar V."/>
            <person name="Chan A.P."/>
            <person name="Thibaud-Nissen F."/>
            <person name="Schobel S."/>
            <person name="Town C.D."/>
        </authorList>
    </citation>
    <scope>GENOME REANNOTATION</scope>
    <source>
        <strain>cv. Columbia</strain>
    </source>
</reference>
<dbReference type="EMBL" id="AB005233">
    <property type="protein sequence ID" value="BAB11457.1"/>
    <property type="molecule type" value="Genomic_DNA"/>
</dbReference>
<dbReference type="EMBL" id="CP002688">
    <property type="protein sequence ID" value="AED94686.1"/>
    <property type="molecule type" value="Genomic_DNA"/>
</dbReference>
<dbReference type="RefSeq" id="NP_198966.1">
    <property type="nucleotide sequence ID" value="NM_123515.1"/>
</dbReference>
<dbReference type="FunCoup" id="Q9FFS9">
    <property type="interactions" value="1"/>
</dbReference>
<dbReference type="STRING" id="3702.Q9FFS9"/>
<dbReference type="iPTMnet" id="Q9FFS9"/>
<dbReference type="PaxDb" id="3702-AT5G41510.1"/>
<dbReference type="EnsemblPlants" id="AT5G41510.1">
    <property type="protein sequence ID" value="AT5G41510.1"/>
    <property type="gene ID" value="AT5G41510"/>
</dbReference>
<dbReference type="GeneID" id="834153"/>
<dbReference type="Gramene" id="AT5G41510.1">
    <property type="protein sequence ID" value="AT5G41510.1"/>
    <property type="gene ID" value="AT5G41510"/>
</dbReference>
<dbReference type="KEGG" id="ath:AT5G41510"/>
<dbReference type="Araport" id="AT5G41510"/>
<dbReference type="TAIR" id="AT5G41510"/>
<dbReference type="HOGENOM" id="CLU_034692_0_0_1"/>
<dbReference type="InParanoid" id="Q9FFS9"/>
<dbReference type="OMA" id="HVCSYVR"/>
<dbReference type="PhylomeDB" id="Q9FFS9"/>
<dbReference type="PRO" id="PR:Q9FFS9"/>
<dbReference type="Proteomes" id="UP000006548">
    <property type="component" value="Chromosome 5"/>
</dbReference>
<dbReference type="ExpressionAtlas" id="Q9FFS9">
    <property type="expression patterns" value="baseline and differential"/>
</dbReference>
<dbReference type="CDD" id="cd22157">
    <property type="entry name" value="F-box_AtFBW1-like"/>
    <property type="match status" value="1"/>
</dbReference>
<dbReference type="Gene3D" id="1.20.1280.50">
    <property type="match status" value="1"/>
</dbReference>
<dbReference type="InterPro" id="IPR006527">
    <property type="entry name" value="F-box-assoc_dom_typ1"/>
</dbReference>
<dbReference type="InterPro" id="IPR017451">
    <property type="entry name" value="F-box-assoc_interact_dom"/>
</dbReference>
<dbReference type="InterPro" id="IPR036047">
    <property type="entry name" value="F-box-like_dom_sf"/>
</dbReference>
<dbReference type="InterPro" id="IPR001810">
    <property type="entry name" value="F-box_dom"/>
</dbReference>
<dbReference type="InterPro" id="IPR050796">
    <property type="entry name" value="SCF_F-box_component"/>
</dbReference>
<dbReference type="NCBIfam" id="TIGR01640">
    <property type="entry name" value="F_box_assoc_1"/>
    <property type="match status" value="1"/>
</dbReference>
<dbReference type="PANTHER" id="PTHR31672">
    <property type="entry name" value="BNACNNG10540D PROTEIN"/>
    <property type="match status" value="1"/>
</dbReference>
<dbReference type="PANTHER" id="PTHR31672:SF13">
    <property type="entry name" value="F-BOX PROTEIN CPR30-LIKE"/>
    <property type="match status" value="1"/>
</dbReference>
<dbReference type="Pfam" id="PF00646">
    <property type="entry name" value="F-box"/>
    <property type="match status" value="1"/>
</dbReference>
<dbReference type="Pfam" id="PF07734">
    <property type="entry name" value="FBA_1"/>
    <property type="match status" value="1"/>
</dbReference>
<dbReference type="SMART" id="SM00256">
    <property type="entry name" value="FBOX"/>
    <property type="match status" value="1"/>
</dbReference>
<dbReference type="SUPFAM" id="SSF81383">
    <property type="entry name" value="F-box domain"/>
    <property type="match status" value="1"/>
</dbReference>
<dbReference type="PROSITE" id="PS50181">
    <property type="entry name" value="FBOX"/>
    <property type="match status" value="1"/>
</dbReference>
<proteinExistence type="predicted"/>